<sequence>MDAEIISVGTEIVLGQIINTNAAYLANRLTQLDLPATYQTTVDDQSQRLERVINHALTRAQLVFVCGGLGPTADDITMPTVAKTLGKELQTDEEHWKWIQKTFEQRQIKMEPENIRQAQYPRGGEPLANPVGLALGCWYETKGKVVVVLPGPPAEFKAMVEKSLVPKLQQYFQTRKQITSRTLNFLGRPESQLMDEIEGATNDIPGISITSYVQPTAIQVRLTVRDLPVIEAEEKIDQAQKAILAVEEPFFFGVGDDLTLAKVVVEQLKKRGWKLTAAESLTGGMFQSAICSVPGASTVFNGGFVTYAASAKEKLLGIPHATIDRYGVVSSETAATMAEGCQRKLNVEVGIGFTGVAGPDMLEGQPAGTVWIGLAMKGRSTKTVQLHLASYVGRQAIRTLSVQYGLQLIYHELKK</sequence>
<keyword id="KW-1185">Reference proteome</keyword>
<reference key="1">
    <citation type="journal article" date="2011" name="PLoS Genet.">
        <title>The evolution of host specialization in the vertebrate gut symbiont Lactobacillus reuteri.</title>
        <authorList>
            <person name="Frese S.A."/>
            <person name="Benson A.K."/>
            <person name="Tannock G.W."/>
            <person name="Loach D.M."/>
            <person name="Kim J."/>
            <person name="Zhang M."/>
            <person name="Oh P.L."/>
            <person name="Heng N.C."/>
            <person name="Patil P.B."/>
            <person name="Juge N."/>
            <person name="Mackenzie D.A."/>
            <person name="Pearson B.M."/>
            <person name="Lapidus A."/>
            <person name="Dalin E."/>
            <person name="Tice H."/>
            <person name="Goltsman E."/>
            <person name="Land M."/>
            <person name="Hauser L."/>
            <person name="Ivanova N."/>
            <person name="Kyrpides N.C."/>
            <person name="Walter J."/>
        </authorList>
    </citation>
    <scope>NUCLEOTIDE SEQUENCE [LARGE SCALE GENOMIC DNA]</scope>
    <source>
        <strain>DSM 20016</strain>
    </source>
</reference>
<dbReference type="EMBL" id="CP000705">
    <property type="protein sequence ID" value="ABQ82790.1"/>
    <property type="molecule type" value="Genomic_DNA"/>
</dbReference>
<dbReference type="RefSeq" id="WP_003667618.1">
    <property type="nucleotide sequence ID" value="NC_009513.1"/>
</dbReference>
<dbReference type="SMR" id="A5VIW6"/>
<dbReference type="STRING" id="557436.Lreu_0522"/>
<dbReference type="KEGG" id="lre:Lreu_0522"/>
<dbReference type="PATRIC" id="fig|557436.17.peg.1802"/>
<dbReference type="eggNOG" id="COG1058">
    <property type="taxonomic scope" value="Bacteria"/>
</dbReference>
<dbReference type="eggNOG" id="COG1546">
    <property type="taxonomic scope" value="Bacteria"/>
</dbReference>
<dbReference type="HOGENOM" id="CLU_030805_9_3_9"/>
<dbReference type="Proteomes" id="UP000001991">
    <property type="component" value="Chromosome"/>
</dbReference>
<dbReference type="CDD" id="cd00885">
    <property type="entry name" value="cinA"/>
    <property type="match status" value="1"/>
</dbReference>
<dbReference type="Gene3D" id="3.90.950.20">
    <property type="entry name" value="CinA-like"/>
    <property type="match status" value="1"/>
</dbReference>
<dbReference type="Gene3D" id="3.40.980.10">
    <property type="entry name" value="MoaB/Mog-like domain"/>
    <property type="match status" value="1"/>
</dbReference>
<dbReference type="HAMAP" id="MF_00226_B">
    <property type="entry name" value="CinA_B"/>
    <property type="match status" value="1"/>
</dbReference>
<dbReference type="InterPro" id="IPR050101">
    <property type="entry name" value="CinA"/>
</dbReference>
<dbReference type="InterPro" id="IPR036653">
    <property type="entry name" value="CinA-like_C"/>
</dbReference>
<dbReference type="InterPro" id="IPR008136">
    <property type="entry name" value="CinA_C"/>
</dbReference>
<dbReference type="InterPro" id="IPR041424">
    <property type="entry name" value="CinA_KH"/>
</dbReference>
<dbReference type="InterPro" id="IPR008135">
    <property type="entry name" value="Competence-induced_CinA"/>
</dbReference>
<dbReference type="InterPro" id="IPR036425">
    <property type="entry name" value="MoaB/Mog-like_dom_sf"/>
</dbReference>
<dbReference type="InterPro" id="IPR001453">
    <property type="entry name" value="MoaB/Mog_dom"/>
</dbReference>
<dbReference type="NCBIfam" id="TIGR00200">
    <property type="entry name" value="cinA_nterm"/>
    <property type="match status" value="1"/>
</dbReference>
<dbReference type="NCBIfam" id="TIGR00199">
    <property type="entry name" value="PncC_domain"/>
    <property type="match status" value="1"/>
</dbReference>
<dbReference type="NCBIfam" id="NF001813">
    <property type="entry name" value="PRK00549.1"/>
    <property type="match status" value="1"/>
</dbReference>
<dbReference type="PANTHER" id="PTHR13939">
    <property type="entry name" value="NICOTINAMIDE-NUCLEOTIDE AMIDOHYDROLASE PNCC"/>
    <property type="match status" value="1"/>
</dbReference>
<dbReference type="PANTHER" id="PTHR13939:SF0">
    <property type="entry name" value="NMN AMIDOHYDROLASE-LIKE PROTEIN YFAY"/>
    <property type="match status" value="1"/>
</dbReference>
<dbReference type="Pfam" id="PF02464">
    <property type="entry name" value="CinA"/>
    <property type="match status" value="1"/>
</dbReference>
<dbReference type="Pfam" id="PF18146">
    <property type="entry name" value="CinA_KH"/>
    <property type="match status" value="1"/>
</dbReference>
<dbReference type="Pfam" id="PF00994">
    <property type="entry name" value="MoCF_biosynth"/>
    <property type="match status" value="1"/>
</dbReference>
<dbReference type="PIRSF" id="PIRSF006728">
    <property type="entry name" value="CinA"/>
    <property type="match status" value="1"/>
</dbReference>
<dbReference type="SMART" id="SM00852">
    <property type="entry name" value="MoCF_biosynth"/>
    <property type="match status" value="1"/>
</dbReference>
<dbReference type="SUPFAM" id="SSF142433">
    <property type="entry name" value="CinA-like"/>
    <property type="match status" value="1"/>
</dbReference>
<dbReference type="SUPFAM" id="SSF53218">
    <property type="entry name" value="Molybdenum cofactor biosynthesis proteins"/>
    <property type="match status" value="1"/>
</dbReference>
<proteinExistence type="inferred from homology"/>
<evidence type="ECO:0000255" key="1">
    <source>
        <dbReference type="HAMAP-Rule" id="MF_00226"/>
    </source>
</evidence>
<protein>
    <recommendedName>
        <fullName evidence="1">Putative competence-damage inducible protein</fullName>
    </recommendedName>
</protein>
<name>CINA_LIMRD</name>
<gene>
    <name evidence="1" type="primary">cinA</name>
    <name type="ordered locus">Lreu_0522</name>
</gene>
<comment type="similarity">
    <text evidence="1">Belongs to the CinA family.</text>
</comment>
<organism>
    <name type="scientific">Limosilactobacillus reuteri (strain DSM 20016)</name>
    <name type="common">Lactobacillus reuteri</name>
    <dbReference type="NCBI Taxonomy" id="557436"/>
    <lineage>
        <taxon>Bacteria</taxon>
        <taxon>Bacillati</taxon>
        <taxon>Bacillota</taxon>
        <taxon>Bacilli</taxon>
        <taxon>Lactobacillales</taxon>
        <taxon>Lactobacillaceae</taxon>
        <taxon>Limosilactobacillus</taxon>
    </lineage>
</organism>
<feature type="chain" id="PRO_0000336502" description="Putative competence-damage inducible protein">
    <location>
        <begin position="1"/>
        <end position="415"/>
    </location>
</feature>
<accession>A5VIW6</accession>